<proteinExistence type="evidence at protein level"/>
<sequence>MLIFYAKYAFIFWFFVGSNQGEMLLMDKISHDKTLLNVTACTQNCLEKGQMDFRSCLKDCRINGTFPGALRKVQENYQMNMICRTESEIVFQIDWVQHSRGTEPAPNATYIIRVDAVKDDNKETALYLSDDNFLILPGLESNSTHNITALAMHGDGSYSLIAKDQTFATLIRGYQPSKMGAVNLLRFVPQPDDLHHIAAEIEWKPSAESNCYFDMVSYSTNSVNMDEPLEVQFRDRKKLYRHTVDNLEFDKQYHVGVRTVNIMNRLESDLQWLPIAVPSCLDWYPYNYTLCPPHKPENLTVTQKQYLPNILALNITWARPRYLPDNYTLHIFDLFKGGTELNYTLDQNRSHFYVPKITVLGSHFEVHLVAQSAGGKNVSGLTLDKVHRGVLLSEGNMVKLVLFIIVPICCILMLCSLTFCRRNRSEVQALQMDAKDAKASEFHLSLMDSSGLLVTLSANESLEVMDELEVEPHSVLLQDVLGEGAFGLVRRGVYKKRQVAVKLLKDEPNDEDVYAFKCEIQMLKAVGKHPNIVGIVGYSTRFSNQMMLLIEYCSLGSLQNFLREEWKFRQEQNAIGLKKNLEQNVDNRRFNRLPRNSIHDRIEDINNSMLSTVEEESESDQTHSSRCETYTLTRITNAADNKGYGLEDIENIGGSYIPKTAEAPKDRPKRKLKPQPKKDSKQDFKSDNKKRIFENKEYFDCLDSSDTKPRIPLKYADLLDIAQQVAVGMEFLAQNKVVHRDLAARNVLISVDRSIKIADFGLSRDVYHENVYRKSGGSGKLPIKWLALESLTHQVYTSQSDVWSFGVLLYEITTLGGMPYPSVSPSDLLQLLRQGHRMKRPEGCTQEMFSLMESCWSSVPSHRPTFSALKHRLGGMILATNDVPERLKQLQAATESKLKSCDGLNSKVEQVPCEEELYLEPLN</sequence>
<protein>
    <recommendedName>
        <fullName>Tyrosine-protein kinase receptor torso</fullName>
        <ecNumber>2.7.10.1</ecNumber>
    </recommendedName>
</protein>
<keyword id="KW-0025">Alternative splicing</keyword>
<keyword id="KW-0067">ATP-binding</keyword>
<keyword id="KW-0217">Developmental protein</keyword>
<keyword id="KW-0325">Glycoprotein</keyword>
<keyword id="KW-0418">Kinase</keyword>
<keyword id="KW-0460">Magnesium</keyword>
<keyword id="KW-0472">Membrane</keyword>
<keyword id="KW-0479">Metal-binding</keyword>
<keyword id="KW-0547">Nucleotide-binding</keyword>
<keyword id="KW-0597">Phosphoprotein</keyword>
<keyword id="KW-0675">Receptor</keyword>
<keyword id="KW-1185">Reference proteome</keyword>
<keyword id="KW-0732">Signal</keyword>
<keyword id="KW-0808">Transferase</keyword>
<keyword id="KW-0812">Transmembrane</keyword>
<keyword id="KW-1133">Transmembrane helix</keyword>
<keyword id="KW-0829">Tyrosine-protein kinase</keyword>
<accession>P18475</accession>
<accession>A8DY54</accession>
<accession>A8DY56</accession>
<accession>Q9V4R2</accession>
<dbReference type="EC" id="2.7.10.1"/>
<dbReference type="EMBL" id="X15150">
    <property type="protein sequence ID" value="CAA33247.1"/>
    <property type="molecule type" value="Genomic_DNA"/>
</dbReference>
<dbReference type="EMBL" id="AE013599">
    <property type="protein sequence ID" value="AAF59203.1"/>
    <property type="molecule type" value="Genomic_DNA"/>
</dbReference>
<dbReference type="EMBL" id="AE013599">
    <property type="protein sequence ID" value="ABV53713.1"/>
    <property type="molecule type" value="Genomic_DNA"/>
</dbReference>
<dbReference type="EMBL" id="AE013599">
    <property type="protein sequence ID" value="ABV53714.2"/>
    <property type="molecule type" value="Genomic_DNA"/>
</dbReference>
<dbReference type="EMBL" id="AY071403">
    <property type="protein sequence ID" value="AAL49025.1"/>
    <property type="molecule type" value="mRNA"/>
</dbReference>
<dbReference type="PIR" id="S03900">
    <property type="entry name" value="S03900"/>
</dbReference>
<dbReference type="RefSeq" id="NP_001097212.2">
    <molecule id="P18475-3"/>
    <property type="nucleotide sequence ID" value="NM_001103742.2"/>
</dbReference>
<dbReference type="RefSeq" id="NP_476762.1">
    <molecule id="P18475-1"/>
    <property type="nucleotide sequence ID" value="NM_057414.4"/>
</dbReference>
<dbReference type="SMR" id="P18475"/>
<dbReference type="BioGRID" id="61589">
    <property type="interactions" value="36"/>
</dbReference>
<dbReference type="FunCoup" id="P18475">
    <property type="interactions" value="93"/>
</dbReference>
<dbReference type="IntAct" id="P18475">
    <property type="interactions" value="2"/>
</dbReference>
<dbReference type="STRING" id="7227.FBpp0088012"/>
<dbReference type="GlyCosmos" id="P18475">
    <property type="glycosylation" value="12 sites, No reported glycans"/>
</dbReference>
<dbReference type="GlyGen" id="P18475">
    <property type="glycosylation" value="12 sites"/>
</dbReference>
<dbReference type="iPTMnet" id="P18475"/>
<dbReference type="PaxDb" id="7227-FBpp0111751"/>
<dbReference type="EnsemblMetazoa" id="FBtr0088938">
    <molecule id="P18475-1"/>
    <property type="protein sequence ID" value="FBpp0088012"/>
    <property type="gene ID" value="FBgn0003733"/>
</dbReference>
<dbReference type="EnsemblMetazoa" id="FBtr0339117">
    <molecule id="P18475-3"/>
    <property type="protein sequence ID" value="FBpp0308262"/>
    <property type="gene ID" value="FBgn0003733"/>
</dbReference>
<dbReference type="GeneID" id="35717"/>
<dbReference type="KEGG" id="dme:Dmel_CG1389"/>
<dbReference type="UCSC" id="CG1389-RA">
    <molecule id="P18475-1"/>
    <property type="organism name" value="d. melanogaster"/>
</dbReference>
<dbReference type="AGR" id="FB:FBgn0003733"/>
<dbReference type="CTD" id="21977"/>
<dbReference type="FlyBase" id="FBgn0003733">
    <property type="gene designation" value="tor"/>
</dbReference>
<dbReference type="VEuPathDB" id="VectorBase:FBgn0003733"/>
<dbReference type="eggNOG" id="KOG0200">
    <property type="taxonomic scope" value="Eukaryota"/>
</dbReference>
<dbReference type="InParanoid" id="P18475"/>
<dbReference type="OMA" id="AEIEWQP"/>
<dbReference type="OrthoDB" id="3256376at2759"/>
<dbReference type="PhylomeDB" id="P18475"/>
<dbReference type="BRENDA" id="2.7.10.1">
    <property type="organism ID" value="1994"/>
</dbReference>
<dbReference type="SignaLink" id="P18475"/>
<dbReference type="BioGRID-ORCS" id="35717">
    <property type="hits" value="0 hits in 1 CRISPR screen"/>
</dbReference>
<dbReference type="ChiTaRS" id="Egfr">
    <property type="organism name" value="fly"/>
</dbReference>
<dbReference type="GenomeRNAi" id="35717"/>
<dbReference type="PRO" id="PR:P18475"/>
<dbReference type="Proteomes" id="UP000000803">
    <property type="component" value="Chromosome 2R"/>
</dbReference>
<dbReference type="Bgee" id="FBgn0003733">
    <property type="expression patterns" value="Expressed in egg cell and 20 other cell types or tissues"/>
</dbReference>
<dbReference type="ExpressionAtlas" id="P18475">
    <property type="expression patterns" value="baseline and differential"/>
</dbReference>
<dbReference type="GO" id="GO:0005886">
    <property type="term" value="C:plasma membrane"/>
    <property type="evidence" value="ECO:0000314"/>
    <property type="project" value="FlyBase"/>
</dbReference>
<dbReference type="GO" id="GO:0043235">
    <property type="term" value="C:receptor complex"/>
    <property type="evidence" value="ECO:0000318"/>
    <property type="project" value="GO_Central"/>
</dbReference>
<dbReference type="GO" id="GO:0005524">
    <property type="term" value="F:ATP binding"/>
    <property type="evidence" value="ECO:0007669"/>
    <property type="project" value="UniProtKB-KW"/>
</dbReference>
<dbReference type="GO" id="GO:0046872">
    <property type="term" value="F:metal ion binding"/>
    <property type="evidence" value="ECO:0007669"/>
    <property type="project" value="UniProtKB-KW"/>
</dbReference>
<dbReference type="GO" id="GO:0004714">
    <property type="term" value="F:transmembrane receptor protein tyrosine kinase activity"/>
    <property type="evidence" value="ECO:0000314"/>
    <property type="project" value="FlyBase"/>
</dbReference>
<dbReference type="GO" id="GO:0007169">
    <property type="term" value="P:cell surface receptor protein tyrosine kinase signaling pathway"/>
    <property type="evidence" value="ECO:0000318"/>
    <property type="project" value="GO_Central"/>
</dbReference>
<dbReference type="GO" id="GO:0030381">
    <property type="term" value="P:chorion-containing eggshell pattern formation"/>
    <property type="evidence" value="ECO:0007001"/>
    <property type="project" value="FlyBase"/>
</dbReference>
<dbReference type="GO" id="GO:0007369">
    <property type="term" value="P:gastrulation"/>
    <property type="evidence" value="ECO:0000315"/>
    <property type="project" value="FlyBase"/>
</dbReference>
<dbReference type="GO" id="GO:0008354">
    <property type="term" value="P:germ cell migration"/>
    <property type="evidence" value="ECO:0000315"/>
    <property type="project" value="FlyBase"/>
</dbReference>
<dbReference type="GO" id="GO:0007552">
    <property type="term" value="P:metamorphosis"/>
    <property type="evidence" value="ECO:0000315"/>
    <property type="project" value="FlyBase"/>
</dbReference>
<dbReference type="GO" id="GO:0046957">
    <property type="term" value="P:negative phototaxis"/>
    <property type="evidence" value="ECO:0000315"/>
    <property type="project" value="FlyBase"/>
</dbReference>
<dbReference type="GO" id="GO:0035331">
    <property type="term" value="P:negative regulation of hippo signaling"/>
    <property type="evidence" value="ECO:0000315"/>
    <property type="project" value="FlyBase"/>
</dbReference>
<dbReference type="GO" id="GO:0040015">
    <property type="term" value="P:negative regulation of multicellular organism growth"/>
    <property type="evidence" value="ECO:0000315"/>
    <property type="project" value="FlyBase"/>
</dbReference>
<dbReference type="GO" id="GO:0007278">
    <property type="term" value="P:pole cell fate determination"/>
    <property type="evidence" value="ECO:0000316"/>
    <property type="project" value="FlyBase"/>
</dbReference>
<dbReference type="GO" id="GO:0043410">
    <property type="term" value="P:positive regulation of MAPK cascade"/>
    <property type="evidence" value="ECO:0000315"/>
    <property type="project" value="FlyBase"/>
</dbReference>
<dbReference type="GO" id="GO:0046579">
    <property type="term" value="P:positive regulation of Ras protein signal transduction"/>
    <property type="evidence" value="ECO:0000314"/>
    <property type="project" value="FlyBase"/>
</dbReference>
<dbReference type="GO" id="GO:0007362">
    <property type="term" value="P:terminal region determination"/>
    <property type="evidence" value="ECO:0000315"/>
    <property type="project" value="FlyBase"/>
</dbReference>
<dbReference type="GO" id="GO:0008293">
    <property type="term" value="P:torso signaling pathway"/>
    <property type="evidence" value="ECO:0000314"/>
    <property type="project" value="FlyBase"/>
</dbReference>
<dbReference type="CDD" id="cd00192">
    <property type="entry name" value="PTKc"/>
    <property type="match status" value="1"/>
</dbReference>
<dbReference type="FunFam" id="1.10.510.10:FF:000190">
    <property type="entry name" value="Proto-oncogene tyrosine-protein kinase receptor Ret"/>
    <property type="match status" value="1"/>
</dbReference>
<dbReference type="FunFam" id="3.30.200.20:FF:000931">
    <property type="entry name" value="tyrosine-protein kinase receptor torso"/>
    <property type="match status" value="1"/>
</dbReference>
<dbReference type="Gene3D" id="3.30.200.20">
    <property type="entry name" value="Phosphorylase Kinase, domain 1"/>
    <property type="match status" value="1"/>
</dbReference>
<dbReference type="Gene3D" id="1.10.510.10">
    <property type="entry name" value="Transferase(Phosphotransferase) domain 1"/>
    <property type="match status" value="1"/>
</dbReference>
<dbReference type="InterPro" id="IPR036116">
    <property type="entry name" value="FN3_sf"/>
</dbReference>
<dbReference type="InterPro" id="IPR011009">
    <property type="entry name" value="Kinase-like_dom_sf"/>
</dbReference>
<dbReference type="InterPro" id="IPR000719">
    <property type="entry name" value="Prot_kinase_dom"/>
</dbReference>
<dbReference type="InterPro" id="IPR017441">
    <property type="entry name" value="Protein_kinase_ATP_BS"/>
</dbReference>
<dbReference type="InterPro" id="IPR050122">
    <property type="entry name" value="RTK"/>
</dbReference>
<dbReference type="InterPro" id="IPR001245">
    <property type="entry name" value="Ser-Thr/Tyr_kinase_cat_dom"/>
</dbReference>
<dbReference type="InterPro" id="IPR008266">
    <property type="entry name" value="Tyr_kinase_AS"/>
</dbReference>
<dbReference type="InterPro" id="IPR020635">
    <property type="entry name" value="Tyr_kinase_cat_dom"/>
</dbReference>
<dbReference type="PANTHER" id="PTHR24416">
    <property type="entry name" value="TYROSINE-PROTEIN KINASE RECEPTOR"/>
    <property type="match status" value="1"/>
</dbReference>
<dbReference type="PANTHER" id="PTHR24416:SF620">
    <property type="entry name" value="TYROSINE-PROTEIN KINASE RECEPTOR TORSO"/>
    <property type="match status" value="1"/>
</dbReference>
<dbReference type="Pfam" id="PF07714">
    <property type="entry name" value="PK_Tyr_Ser-Thr"/>
    <property type="match status" value="1"/>
</dbReference>
<dbReference type="SMART" id="SM00219">
    <property type="entry name" value="TyrKc"/>
    <property type="match status" value="1"/>
</dbReference>
<dbReference type="SUPFAM" id="SSF49265">
    <property type="entry name" value="Fibronectin type III"/>
    <property type="match status" value="1"/>
</dbReference>
<dbReference type="SUPFAM" id="SSF56112">
    <property type="entry name" value="Protein kinase-like (PK-like)"/>
    <property type="match status" value="1"/>
</dbReference>
<dbReference type="PROSITE" id="PS00107">
    <property type="entry name" value="PROTEIN_KINASE_ATP"/>
    <property type="match status" value="1"/>
</dbReference>
<dbReference type="PROSITE" id="PS50011">
    <property type="entry name" value="PROTEIN_KINASE_DOM"/>
    <property type="match status" value="1"/>
</dbReference>
<dbReference type="PROSITE" id="PS00109">
    <property type="entry name" value="PROTEIN_KINASE_TYR"/>
    <property type="match status" value="1"/>
</dbReference>
<evidence type="ECO:0000250" key="1">
    <source>
        <dbReference type="UniProtKB" id="D2IYS2"/>
    </source>
</evidence>
<evidence type="ECO:0000255" key="2"/>
<evidence type="ECO:0000255" key="3">
    <source>
        <dbReference type="PROSITE-ProRule" id="PRU00159"/>
    </source>
</evidence>
<evidence type="ECO:0000255" key="4">
    <source>
        <dbReference type="PROSITE-ProRule" id="PRU10028"/>
    </source>
</evidence>
<evidence type="ECO:0000256" key="5">
    <source>
        <dbReference type="SAM" id="MobiDB-lite"/>
    </source>
</evidence>
<evidence type="ECO:0000269" key="6">
    <source>
    </source>
</evidence>
<evidence type="ECO:0000269" key="7">
    <source>
    </source>
</evidence>
<evidence type="ECO:0000269" key="8">
    <source>
    </source>
</evidence>
<evidence type="ECO:0000269" key="9">
    <source>
    </source>
</evidence>
<evidence type="ECO:0000305" key="10"/>
<evidence type="ECO:0000312" key="11">
    <source>
        <dbReference type="FlyBase" id="FBgn0003733"/>
    </source>
</evidence>
<name>TORSO_DROME</name>
<organism>
    <name type="scientific">Drosophila melanogaster</name>
    <name type="common">Fruit fly</name>
    <dbReference type="NCBI Taxonomy" id="7227"/>
    <lineage>
        <taxon>Eukaryota</taxon>
        <taxon>Metazoa</taxon>
        <taxon>Ecdysozoa</taxon>
        <taxon>Arthropoda</taxon>
        <taxon>Hexapoda</taxon>
        <taxon>Insecta</taxon>
        <taxon>Pterygota</taxon>
        <taxon>Neoptera</taxon>
        <taxon>Endopterygota</taxon>
        <taxon>Diptera</taxon>
        <taxon>Brachycera</taxon>
        <taxon>Muscomorpha</taxon>
        <taxon>Ephydroidea</taxon>
        <taxon>Drosophilidae</taxon>
        <taxon>Drosophila</taxon>
        <taxon>Sophophora</taxon>
    </lineage>
</organism>
<feature type="signal peptide" evidence="2">
    <location>
        <begin position="1"/>
        <end position="20"/>
    </location>
</feature>
<feature type="chain" id="PRO_0000024477" description="Tyrosine-protein kinase receptor torso">
    <location>
        <begin position="21"/>
        <end position="923"/>
    </location>
</feature>
<feature type="topological domain" description="Extracellular" evidence="2">
    <location>
        <begin position="21"/>
        <end position="399"/>
    </location>
</feature>
<feature type="transmembrane region" description="Helical" evidence="2">
    <location>
        <begin position="400"/>
        <end position="420"/>
    </location>
</feature>
<feature type="topological domain" description="Cytoplasmic" evidence="2">
    <location>
        <begin position="421"/>
        <end position="923"/>
    </location>
</feature>
<feature type="domain" description="Protein kinase" evidence="3">
    <location>
        <begin position="475"/>
        <end position="874"/>
    </location>
</feature>
<feature type="region of interest" description="Disordered" evidence="5">
    <location>
        <begin position="656"/>
        <end position="687"/>
    </location>
</feature>
<feature type="compositionally biased region" description="Basic and acidic residues" evidence="5">
    <location>
        <begin position="676"/>
        <end position="687"/>
    </location>
</feature>
<feature type="active site" description="Proton acceptor" evidence="3 4">
    <location>
        <position position="741"/>
    </location>
</feature>
<feature type="binding site" evidence="3">
    <location>
        <begin position="481"/>
        <end position="489"/>
    </location>
    <ligand>
        <name>ATP</name>
        <dbReference type="ChEBI" id="CHEBI:30616"/>
    </ligand>
</feature>
<feature type="binding site" evidence="3">
    <location>
        <position position="502"/>
    </location>
    <ligand>
        <name>ATP</name>
        <dbReference type="ChEBI" id="CHEBI:30616"/>
    </ligand>
</feature>
<feature type="modified residue" description="Phosphoserine" evidence="6">
    <location>
        <position position="608"/>
    </location>
</feature>
<feature type="glycosylation site" description="N-linked (GlcNAc...) asparagine" evidence="2">
    <location>
        <position position="37"/>
    </location>
</feature>
<feature type="glycosylation site" description="N-linked (GlcNAc...) asparagine" evidence="2">
    <location>
        <position position="63"/>
    </location>
</feature>
<feature type="glycosylation site" description="N-linked (GlcNAc...) asparagine" evidence="2">
    <location>
        <position position="107"/>
    </location>
</feature>
<feature type="glycosylation site" description="N-linked (GlcNAc...) asparagine" evidence="2">
    <location>
        <position position="142"/>
    </location>
</feature>
<feature type="glycosylation site" description="N-linked (GlcNAc...) asparagine" evidence="2">
    <location>
        <position position="146"/>
    </location>
</feature>
<feature type="glycosylation site" description="N-linked (GlcNAc...) asparagine" evidence="2">
    <location>
        <position position="287"/>
    </location>
</feature>
<feature type="glycosylation site" description="N-linked (GlcNAc...) asparagine" evidence="2">
    <location>
        <position position="298"/>
    </location>
</feature>
<feature type="glycosylation site" description="N-linked (GlcNAc...) asparagine" evidence="2">
    <location>
        <position position="314"/>
    </location>
</feature>
<feature type="glycosylation site" description="N-linked (GlcNAc...) asparagine" evidence="2">
    <location>
        <position position="326"/>
    </location>
</feature>
<feature type="glycosylation site" description="N-linked (GlcNAc...) asparagine" evidence="2">
    <location>
        <position position="342"/>
    </location>
</feature>
<feature type="glycosylation site" description="N-linked (GlcNAc...) asparagine" evidence="2">
    <location>
        <position position="348"/>
    </location>
</feature>
<feature type="glycosylation site" description="N-linked (GlcNAc...) asparagine" evidence="2">
    <location>
        <position position="377"/>
    </location>
</feature>
<feature type="splice variant" id="VSP_058212" description="In isoform D." evidence="10">
    <location>
        <begin position="389"/>
        <end position="393"/>
    </location>
</feature>
<feature type="sequence conflict" description="In Ref. 1; CAA33247." evidence="10" ref="1">
    <original>A</original>
    <variation>T</variation>
    <location>
        <position position="125"/>
    </location>
</feature>
<feature type="sequence conflict" description="In Ref. 1; CAA33247." evidence="10" ref="1">
    <original>H</original>
    <variation>P</variation>
    <location>
        <position position="387"/>
    </location>
</feature>
<feature type="sequence conflict" description="In Ref. 1; CAA33247." evidence="10" ref="1">
    <original>R</original>
    <variation>Q</variation>
    <location>
        <position position="667"/>
    </location>
</feature>
<reference key="1">
    <citation type="journal article" date="1989" name="Nature">
        <title>The Drosophila gene torso encodes a putative receptor tyrosine kinase.</title>
        <authorList>
            <person name="Sprenger F."/>
            <person name="Stevens L.M."/>
            <person name="Nuesslein-Volhard C."/>
        </authorList>
    </citation>
    <scope>NUCLEOTIDE SEQUENCE [GENOMIC DNA]</scope>
    <scope>FUNCTION</scope>
    <scope>DEVELOPMENTAL STAGE</scope>
</reference>
<reference key="2">
    <citation type="journal article" date="2000" name="Science">
        <title>The genome sequence of Drosophila melanogaster.</title>
        <authorList>
            <person name="Adams M.D."/>
            <person name="Celniker S.E."/>
            <person name="Holt R.A."/>
            <person name="Evans C.A."/>
            <person name="Gocayne J.D."/>
            <person name="Amanatides P.G."/>
            <person name="Scherer S.E."/>
            <person name="Li P.W."/>
            <person name="Hoskins R.A."/>
            <person name="Galle R.F."/>
            <person name="George R.A."/>
            <person name="Lewis S.E."/>
            <person name="Richards S."/>
            <person name="Ashburner M."/>
            <person name="Henderson S.N."/>
            <person name="Sutton G.G."/>
            <person name="Wortman J.R."/>
            <person name="Yandell M.D."/>
            <person name="Zhang Q."/>
            <person name="Chen L.X."/>
            <person name="Brandon R.C."/>
            <person name="Rogers Y.-H.C."/>
            <person name="Blazej R.G."/>
            <person name="Champe M."/>
            <person name="Pfeiffer B.D."/>
            <person name="Wan K.H."/>
            <person name="Doyle C."/>
            <person name="Baxter E.G."/>
            <person name="Helt G."/>
            <person name="Nelson C.R."/>
            <person name="Miklos G.L.G."/>
            <person name="Abril J.F."/>
            <person name="Agbayani A."/>
            <person name="An H.-J."/>
            <person name="Andrews-Pfannkoch C."/>
            <person name="Baldwin D."/>
            <person name="Ballew R.M."/>
            <person name="Basu A."/>
            <person name="Baxendale J."/>
            <person name="Bayraktaroglu L."/>
            <person name="Beasley E.M."/>
            <person name="Beeson K.Y."/>
            <person name="Benos P.V."/>
            <person name="Berman B.P."/>
            <person name="Bhandari D."/>
            <person name="Bolshakov S."/>
            <person name="Borkova D."/>
            <person name="Botchan M.R."/>
            <person name="Bouck J."/>
            <person name="Brokstein P."/>
            <person name="Brottier P."/>
            <person name="Burtis K.C."/>
            <person name="Busam D.A."/>
            <person name="Butler H."/>
            <person name="Cadieu E."/>
            <person name="Center A."/>
            <person name="Chandra I."/>
            <person name="Cherry J.M."/>
            <person name="Cawley S."/>
            <person name="Dahlke C."/>
            <person name="Davenport L.B."/>
            <person name="Davies P."/>
            <person name="de Pablos B."/>
            <person name="Delcher A."/>
            <person name="Deng Z."/>
            <person name="Mays A.D."/>
            <person name="Dew I."/>
            <person name="Dietz S.M."/>
            <person name="Dodson K."/>
            <person name="Doup L.E."/>
            <person name="Downes M."/>
            <person name="Dugan-Rocha S."/>
            <person name="Dunkov B.C."/>
            <person name="Dunn P."/>
            <person name="Durbin K.J."/>
            <person name="Evangelista C.C."/>
            <person name="Ferraz C."/>
            <person name="Ferriera S."/>
            <person name="Fleischmann W."/>
            <person name="Fosler C."/>
            <person name="Gabrielian A.E."/>
            <person name="Garg N.S."/>
            <person name="Gelbart W.M."/>
            <person name="Glasser K."/>
            <person name="Glodek A."/>
            <person name="Gong F."/>
            <person name="Gorrell J.H."/>
            <person name="Gu Z."/>
            <person name="Guan P."/>
            <person name="Harris M."/>
            <person name="Harris N.L."/>
            <person name="Harvey D.A."/>
            <person name="Heiman T.J."/>
            <person name="Hernandez J.R."/>
            <person name="Houck J."/>
            <person name="Hostin D."/>
            <person name="Houston K.A."/>
            <person name="Howland T.J."/>
            <person name="Wei M.-H."/>
            <person name="Ibegwam C."/>
            <person name="Jalali M."/>
            <person name="Kalush F."/>
            <person name="Karpen G.H."/>
            <person name="Ke Z."/>
            <person name="Kennison J.A."/>
            <person name="Ketchum K.A."/>
            <person name="Kimmel B.E."/>
            <person name="Kodira C.D."/>
            <person name="Kraft C.L."/>
            <person name="Kravitz S."/>
            <person name="Kulp D."/>
            <person name="Lai Z."/>
            <person name="Lasko P."/>
            <person name="Lei Y."/>
            <person name="Levitsky A.A."/>
            <person name="Li J.H."/>
            <person name="Li Z."/>
            <person name="Liang Y."/>
            <person name="Lin X."/>
            <person name="Liu X."/>
            <person name="Mattei B."/>
            <person name="McIntosh T.C."/>
            <person name="McLeod M.P."/>
            <person name="McPherson D."/>
            <person name="Merkulov G."/>
            <person name="Milshina N.V."/>
            <person name="Mobarry C."/>
            <person name="Morris J."/>
            <person name="Moshrefi A."/>
            <person name="Mount S.M."/>
            <person name="Moy M."/>
            <person name="Murphy B."/>
            <person name="Murphy L."/>
            <person name="Muzny D.M."/>
            <person name="Nelson D.L."/>
            <person name="Nelson D.R."/>
            <person name="Nelson K.A."/>
            <person name="Nixon K."/>
            <person name="Nusskern D.R."/>
            <person name="Pacleb J.M."/>
            <person name="Palazzolo M."/>
            <person name="Pittman G.S."/>
            <person name="Pan S."/>
            <person name="Pollard J."/>
            <person name="Puri V."/>
            <person name="Reese M.G."/>
            <person name="Reinert K."/>
            <person name="Remington K."/>
            <person name="Saunders R.D.C."/>
            <person name="Scheeler F."/>
            <person name="Shen H."/>
            <person name="Shue B.C."/>
            <person name="Siden-Kiamos I."/>
            <person name="Simpson M."/>
            <person name="Skupski M.P."/>
            <person name="Smith T.J."/>
            <person name="Spier E."/>
            <person name="Spradling A.C."/>
            <person name="Stapleton M."/>
            <person name="Strong R."/>
            <person name="Sun E."/>
            <person name="Svirskas R."/>
            <person name="Tector C."/>
            <person name="Turner R."/>
            <person name="Venter E."/>
            <person name="Wang A.H."/>
            <person name="Wang X."/>
            <person name="Wang Z.-Y."/>
            <person name="Wassarman D.A."/>
            <person name="Weinstock G.M."/>
            <person name="Weissenbach J."/>
            <person name="Williams S.M."/>
            <person name="Woodage T."/>
            <person name="Worley K.C."/>
            <person name="Wu D."/>
            <person name="Yang S."/>
            <person name="Yao Q.A."/>
            <person name="Ye J."/>
            <person name="Yeh R.-F."/>
            <person name="Zaveri J.S."/>
            <person name="Zhan M."/>
            <person name="Zhang G."/>
            <person name="Zhao Q."/>
            <person name="Zheng L."/>
            <person name="Zheng X.H."/>
            <person name="Zhong F.N."/>
            <person name="Zhong W."/>
            <person name="Zhou X."/>
            <person name="Zhu S.C."/>
            <person name="Zhu X."/>
            <person name="Smith H.O."/>
            <person name="Gibbs R.A."/>
            <person name="Myers E.W."/>
            <person name="Rubin G.M."/>
            <person name="Venter J.C."/>
        </authorList>
    </citation>
    <scope>NUCLEOTIDE SEQUENCE [LARGE SCALE GENOMIC DNA]</scope>
    <source>
        <strain>Berkeley</strain>
    </source>
</reference>
<reference key="3">
    <citation type="journal article" date="2002" name="Genome Biol.">
        <title>Annotation of the Drosophila melanogaster euchromatic genome: a systematic review.</title>
        <authorList>
            <person name="Misra S."/>
            <person name="Crosby M.A."/>
            <person name="Mungall C.J."/>
            <person name="Matthews B.B."/>
            <person name="Campbell K.S."/>
            <person name="Hradecky P."/>
            <person name="Huang Y."/>
            <person name="Kaminker J.S."/>
            <person name="Millburn G.H."/>
            <person name="Prochnik S.E."/>
            <person name="Smith C.D."/>
            <person name="Tupy J.L."/>
            <person name="Whitfield E.J."/>
            <person name="Bayraktaroglu L."/>
            <person name="Berman B.P."/>
            <person name="Bettencourt B.R."/>
            <person name="Celniker S.E."/>
            <person name="de Grey A.D.N.J."/>
            <person name="Drysdale R.A."/>
            <person name="Harris N.L."/>
            <person name="Richter J."/>
            <person name="Russo S."/>
            <person name="Schroeder A.J."/>
            <person name="Shu S.Q."/>
            <person name="Stapleton M."/>
            <person name="Yamada C."/>
            <person name="Ashburner M."/>
            <person name="Gelbart W.M."/>
            <person name="Rubin G.M."/>
            <person name="Lewis S.E."/>
        </authorList>
    </citation>
    <scope>GENOME REANNOTATION</scope>
    <scope>ALTERNATIVE SPLICING</scope>
    <source>
        <strain>Berkeley</strain>
    </source>
</reference>
<reference key="4">
    <citation type="journal article" date="2002" name="Genome Biol.">
        <title>A Drosophila full-length cDNA resource.</title>
        <authorList>
            <person name="Stapleton M."/>
            <person name="Carlson J.W."/>
            <person name="Brokstein P."/>
            <person name="Yu C."/>
            <person name="Champe M."/>
            <person name="George R.A."/>
            <person name="Guarin H."/>
            <person name="Kronmiller B."/>
            <person name="Pacleb J.M."/>
            <person name="Park S."/>
            <person name="Wan K.H."/>
            <person name="Rubin G.M."/>
            <person name="Celniker S.E."/>
        </authorList>
    </citation>
    <scope>NUCLEOTIDE SEQUENCE [LARGE SCALE MRNA] (ISOFORM A)</scope>
    <source>
        <strain>Berkeley</strain>
        <tissue>Embryo</tissue>
    </source>
</reference>
<reference key="5">
    <citation type="journal article" date="1993" name="Mol. Cell. Biol.">
        <title>Biochemical analysis of torso and D-raf during Drosophila embryogenesis: implications for terminal signal transduction.</title>
        <authorList>
            <person name="Sprenger F."/>
            <person name="Torsoclair M.M."/>
            <person name="Morrison D.K."/>
        </authorList>
    </citation>
    <scope>FUNCTION</scope>
    <scope>DEVELOPMENTAL STAGE</scope>
</reference>
<reference key="6">
    <citation type="journal article" date="2008" name="J. Proteome Res.">
        <title>Phosphoproteome analysis of Drosophila melanogaster embryos.</title>
        <authorList>
            <person name="Zhai B."/>
            <person name="Villen J."/>
            <person name="Beausoleil S.A."/>
            <person name="Mintseris J."/>
            <person name="Gygi S.P."/>
        </authorList>
    </citation>
    <scope>PHOSPHORYLATION [LARGE SCALE ANALYSIS] AT SER-608</scope>
    <scope>IDENTIFICATION BY MASS SPECTROMETRY</scope>
    <source>
        <tissue>Embryo</tissue>
    </source>
</reference>
<reference key="7">
    <citation type="journal article" date="2009" name="Science">
        <title>The insect neuropeptide PTTH activates receptor tyrosine kinase torso to initiate metamorphosis.</title>
        <authorList>
            <person name="Rewitz K.F."/>
            <person name="Yamanaka N."/>
            <person name="Gilbert L.I."/>
            <person name="O'Connor M.B."/>
        </authorList>
    </citation>
    <scope>FUNCTION</scope>
    <scope>DEVELOPMENTAL STAGE</scope>
    <scope>DISRUPTION PHENOTYPE</scope>
</reference>
<comment type="function">
    <text evidence="1 7 8 9">Probable receptor tyrosine kinase which is required for determination of anterior and posterior terminal structures in the embryo (PubMed:2927509, PubMed:8423783). During postembryonic development, involved in the initiation of metamorphosis probably by inducing the production of ecdysone in response to prothoracicotropic hormone Ptth (PubMed:19965758). Binding to Ptth stimulates activation of canonical MAPK signaling leading to ERK phosphorylation (By similarity).</text>
</comment>
<comment type="catalytic activity">
    <reaction evidence="4">
        <text>L-tyrosyl-[protein] + ATP = O-phospho-L-tyrosyl-[protein] + ADP + H(+)</text>
        <dbReference type="Rhea" id="RHEA:10596"/>
        <dbReference type="Rhea" id="RHEA-COMP:10136"/>
        <dbReference type="Rhea" id="RHEA-COMP:20101"/>
        <dbReference type="ChEBI" id="CHEBI:15378"/>
        <dbReference type="ChEBI" id="CHEBI:30616"/>
        <dbReference type="ChEBI" id="CHEBI:46858"/>
        <dbReference type="ChEBI" id="CHEBI:61978"/>
        <dbReference type="ChEBI" id="CHEBI:456216"/>
        <dbReference type="EC" id="2.7.10.1"/>
    </reaction>
</comment>
<comment type="cofactor">
    <cofactor evidence="10">
        <name>Mg(2+)</name>
        <dbReference type="ChEBI" id="CHEBI:18420"/>
    </cofactor>
</comment>
<comment type="subcellular location">
    <subcellularLocation>
        <location>Membrane</location>
        <topology>Single-pass type I membrane protein</topology>
    </subcellularLocation>
</comment>
<comment type="alternative products">
    <event type="alternative splicing"/>
    <isoform>
        <id>P18475-1</id>
        <name evidence="11">A</name>
        <sequence type="displayed"/>
    </isoform>
    <isoform>
        <id>P18475-3</id>
        <name evidence="11">D</name>
        <sequence type="described" ref="VSP_058212"/>
    </isoform>
</comment>
<comment type="developmental stage">
    <text evidence="7 8 9">Expressed both maternally and zygotically. Expressed throughout the embryo but is activated specifically at the poles (PubMed:19965758, PubMed:2927509, PubMed:8423783). Expressed in the prothoracic gland in wandering L3 larvae (PubMed:19965758).</text>
</comment>
<comment type="PTM">
    <text evidence="1">May be auto-phosphorylated on tyrosine residues.</text>
</comment>
<comment type="disruption phenotype">
    <text evidence="7">RNAi-mediated knockdown in the prothoracic gland (PG) delays the onset of pupariation by prolonging the L3 larval stage. In addition, pupal size and, to a lesser extent, PG cell size are increased.</text>
</comment>
<comment type="similarity">
    <text evidence="3">Belongs to the protein kinase superfamily. Tyr protein kinase family.</text>
</comment>
<gene>
    <name type="primary">tor</name>
    <name type="ORF">CG1389</name>
</gene>